<gene>
    <name type="primary">Sez6l2</name>
</gene>
<keyword id="KW-0025">Alternative splicing</keyword>
<keyword id="KW-1003">Cell membrane</keyword>
<keyword id="KW-1015">Disulfide bond</keyword>
<keyword id="KW-0256">Endoplasmic reticulum</keyword>
<keyword id="KW-0325">Glycoprotein</keyword>
<keyword id="KW-0472">Membrane</keyword>
<keyword id="KW-1185">Reference proteome</keyword>
<keyword id="KW-0677">Repeat</keyword>
<keyword id="KW-0732">Signal</keyword>
<keyword id="KW-0768">Sushi</keyword>
<keyword id="KW-0812">Transmembrane</keyword>
<keyword id="KW-1133">Transmembrane helix</keyword>
<dbReference type="EMBL" id="AK034088">
    <property type="protein sequence ID" value="BAC28579.1"/>
    <property type="molecule type" value="mRNA"/>
</dbReference>
<dbReference type="EMBL" id="AB206789">
    <property type="protein sequence ID" value="BAE44442.1"/>
    <property type="molecule type" value="mRNA"/>
</dbReference>
<dbReference type="EMBL" id="BC011475">
    <property type="protein sequence ID" value="AAH11475.1"/>
    <property type="molecule type" value="mRNA"/>
</dbReference>
<dbReference type="EMBL" id="BC079573">
    <property type="protein sequence ID" value="AAH79573.1"/>
    <property type="molecule type" value="mRNA"/>
</dbReference>
<dbReference type="EMBL" id="BC096615">
    <property type="protein sequence ID" value="AAH96615.1"/>
    <property type="molecule type" value="mRNA"/>
</dbReference>
<dbReference type="CCDS" id="CCDS40135.1">
    <molecule id="Q4V9Z5-2"/>
</dbReference>
<dbReference type="CCDS" id="CCDS57585.1">
    <molecule id="Q4V9Z5-1"/>
</dbReference>
<dbReference type="CCDS" id="CCDS57586.1">
    <molecule id="Q4V9Z5-3"/>
</dbReference>
<dbReference type="RefSeq" id="NP_001239495.1">
    <molecule id="Q4V9Z5-1"/>
    <property type="nucleotide sequence ID" value="NM_001252566.1"/>
</dbReference>
<dbReference type="RefSeq" id="NP_001239496.1">
    <molecule id="Q4V9Z5-3"/>
    <property type="nucleotide sequence ID" value="NM_001252567.1"/>
</dbReference>
<dbReference type="RefSeq" id="NP_659175.1">
    <molecule id="Q4V9Z5-2"/>
    <property type="nucleotide sequence ID" value="NM_144926.5"/>
</dbReference>
<dbReference type="SMR" id="Q4V9Z5"/>
<dbReference type="FunCoup" id="Q4V9Z5">
    <property type="interactions" value="291"/>
</dbReference>
<dbReference type="IntAct" id="Q4V9Z5">
    <property type="interactions" value="1"/>
</dbReference>
<dbReference type="STRING" id="10090.ENSMUSP00000101940"/>
<dbReference type="GlyCosmos" id="Q4V9Z5">
    <property type="glycosylation" value="5 sites, No reported glycans"/>
</dbReference>
<dbReference type="GlyGen" id="Q4V9Z5">
    <property type="glycosylation" value="10 sites, 3 N-linked glycans (3 sites), 1 O-linked glycan (1 site)"/>
</dbReference>
<dbReference type="iPTMnet" id="Q4V9Z5"/>
<dbReference type="PhosphoSitePlus" id="Q4V9Z5"/>
<dbReference type="SwissPalm" id="Q4V9Z5"/>
<dbReference type="PaxDb" id="10090-ENSMUSP00000101940"/>
<dbReference type="PeptideAtlas" id="Q4V9Z5"/>
<dbReference type="ProteomicsDB" id="255511">
    <molecule id="Q4V9Z5-1"/>
</dbReference>
<dbReference type="ProteomicsDB" id="256536">
    <molecule id="Q4V9Z5-2"/>
</dbReference>
<dbReference type="ProteomicsDB" id="256537">
    <molecule id="Q4V9Z5-3"/>
</dbReference>
<dbReference type="Antibodypedia" id="54161">
    <property type="antibodies" value="80 antibodies from 16 providers"/>
</dbReference>
<dbReference type="DNASU" id="233878"/>
<dbReference type="Ensembl" id="ENSMUST00000106332.3">
    <molecule id="Q4V9Z5-3"/>
    <property type="protein sequence ID" value="ENSMUSP00000101939.2"/>
    <property type="gene ID" value="ENSMUSG00000030683.12"/>
</dbReference>
<dbReference type="Ensembl" id="ENSMUST00000106333.8">
    <molecule id="Q4V9Z5-2"/>
    <property type="protein sequence ID" value="ENSMUSP00000101940.2"/>
    <property type="gene ID" value="ENSMUSG00000030683.12"/>
</dbReference>
<dbReference type="Ensembl" id="ENSMUST00000106335.8">
    <molecule id="Q4V9Z5-1"/>
    <property type="protein sequence ID" value="ENSMUSP00000101942.2"/>
    <property type="gene ID" value="ENSMUSG00000030683.12"/>
</dbReference>
<dbReference type="GeneID" id="233878"/>
<dbReference type="KEGG" id="mmu:233878"/>
<dbReference type="UCSC" id="uc009jtq.2">
    <molecule id="Q4V9Z5-2"/>
    <property type="organism name" value="mouse"/>
</dbReference>
<dbReference type="UCSC" id="uc009jtr.2">
    <molecule id="Q4V9Z5-1"/>
    <property type="organism name" value="mouse"/>
</dbReference>
<dbReference type="UCSC" id="uc012ftx.2">
    <molecule id="Q4V9Z5-3"/>
    <property type="organism name" value="mouse"/>
</dbReference>
<dbReference type="AGR" id="MGI:2385295"/>
<dbReference type="CTD" id="26470"/>
<dbReference type="MGI" id="MGI:2385295">
    <property type="gene designation" value="Sez6l2"/>
</dbReference>
<dbReference type="VEuPathDB" id="HostDB:ENSMUSG00000030683"/>
<dbReference type="eggNOG" id="ENOG502QS53">
    <property type="taxonomic scope" value="Eukaryota"/>
</dbReference>
<dbReference type="GeneTree" id="ENSGT00940000160492"/>
<dbReference type="HOGENOM" id="CLU_011474_3_0_1"/>
<dbReference type="InParanoid" id="Q4V9Z5"/>
<dbReference type="OMA" id="DPGFQIR"/>
<dbReference type="PhylomeDB" id="Q4V9Z5"/>
<dbReference type="TreeFam" id="TF330037"/>
<dbReference type="BioGRID-ORCS" id="233878">
    <property type="hits" value="2 hits in 79 CRISPR screens"/>
</dbReference>
<dbReference type="ChiTaRS" id="Sez6l2">
    <property type="organism name" value="mouse"/>
</dbReference>
<dbReference type="PRO" id="PR:Q4V9Z5"/>
<dbReference type="Proteomes" id="UP000000589">
    <property type="component" value="Chromosome 7"/>
</dbReference>
<dbReference type="RNAct" id="Q4V9Z5">
    <property type="molecule type" value="protein"/>
</dbReference>
<dbReference type="Bgee" id="ENSMUSG00000030683">
    <property type="expression patterns" value="Expressed in supraoptic nucleus and 179 other cell types or tissues"/>
</dbReference>
<dbReference type="ExpressionAtlas" id="Q4V9Z5">
    <property type="expression patterns" value="baseline and differential"/>
</dbReference>
<dbReference type="GO" id="GO:0005783">
    <property type="term" value="C:endoplasmic reticulum"/>
    <property type="evidence" value="ECO:0000314"/>
    <property type="project" value="MGI"/>
</dbReference>
<dbReference type="GO" id="GO:0005789">
    <property type="term" value="C:endoplasmic reticulum membrane"/>
    <property type="evidence" value="ECO:0007669"/>
    <property type="project" value="UniProtKB-SubCell"/>
</dbReference>
<dbReference type="GO" id="GO:0043025">
    <property type="term" value="C:neuronal cell body"/>
    <property type="evidence" value="ECO:0000314"/>
    <property type="project" value="MGI"/>
</dbReference>
<dbReference type="GO" id="GO:0005886">
    <property type="term" value="C:plasma membrane"/>
    <property type="evidence" value="ECO:0007669"/>
    <property type="project" value="UniProtKB-SubCell"/>
</dbReference>
<dbReference type="GO" id="GO:0008344">
    <property type="term" value="P:adult locomotory behavior"/>
    <property type="evidence" value="ECO:0000316"/>
    <property type="project" value="MGI"/>
</dbReference>
<dbReference type="GO" id="GO:0021680">
    <property type="term" value="P:cerebellar Purkinje cell layer development"/>
    <property type="evidence" value="ECO:0000316"/>
    <property type="project" value="MGI"/>
</dbReference>
<dbReference type="GO" id="GO:0060074">
    <property type="term" value="P:synapse maturation"/>
    <property type="evidence" value="ECO:0000316"/>
    <property type="project" value="MGI"/>
</dbReference>
<dbReference type="CDD" id="cd00033">
    <property type="entry name" value="CCP"/>
    <property type="match status" value="5"/>
</dbReference>
<dbReference type="CDD" id="cd00041">
    <property type="entry name" value="CUB"/>
    <property type="match status" value="3"/>
</dbReference>
<dbReference type="FunFam" id="2.10.70.10:FF:000025">
    <property type="entry name" value="seizure 6-like protein 2 isoform X2"/>
    <property type="match status" value="1"/>
</dbReference>
<dbReference type="FunFam" id="2.10.70.10:FF:000039">
    <property type="entry name" value="seizure 6-like protein 2 isoform X2"/>
    <property type="match status" value="1"/>
</dbReference>
<dbReference type="FunFam" id="2.60.120.290:FF:000022">
    <property type="entry name" value="seizure 6-like protein 2 isoform X2"/>
    <property type="match status" value="1"/>
</dbReference>
<dbReference type="FunFam" id="2.60.120.290:FF:000015">
    <property type="entry name" value="Seizure protein 6 homolog isoform 2"/>
    <property type="match status" value="1"/>
</dbReference>
<dbReference type="FunFam" id="2.10.70.10:FF:000009">
    <property type="entry name" value="Seizure related 6 homolog like"/>
    <property type="match status" value="1"/>
</dbReference>
<dbReference type="FunFam" id="2.10.70.10:FF:000010">
    <property type="entry name" value="Seizure related 6 homolog like"/>
    <property type="match status" value="1"/>
</dbReference>
<dbReference type="FunFam" id="2.10.70.10:FF:000012">
    <property type="entry name" value="Seizure related 6 homolog like"/>
    <property type="match status" value="1"/>
</dbReference>
<dbReference type="Gene3D" id="2.10.70.10">
    <property type="entry name" value="Complement Module, domain 1"/>
    <property type="match status" value="5"/>
</dbReference>
<dbReference type="Gene3D" id="2.60.120.290">
    <property type="entry name" value="Spermadhesin, CUB domain"/>
    <property type="match status" value="3"/>
</dbReference>
<dbReference type="InterPro" id="IPR000859">
    <property type="entry name" value="CUB_dom"/>
</dbReference>
<dbReference type="InterPro" id="IPR051277">
    <property type="entry name" value="SEZ6_CSMD_C4BPB_Regulators"/>
</dbReference>
<dbReference type="InterPro" id="IPR035914">
    <property type="entry name" value="Sperma_CUB_dom_sf"/>
</dbReference>
<dbReference type="InterPro" id="IPR035976">
    <property type="entry name" value="Sushi/SCR/CCP_sf"/>
</dbReference>
<dbReference type="InterPro" id="IPR000436">
    <property type="entry name" value="Sushi_SCR_CCP_dom"/>
</dbReference>
<dbReference type="PANTHER" id="PTHR45656">
    <property type="entry name" value="PROTEIN CBR-CLEC-78"/>
    <property type="match status" value="1"/>
</dbReference>
<dbReference type="PANTHER" id="PTHR45656:SF4">
    <property type="entry name" value="PROTEIN CBR-CLEC-78"/>
    <property type="match status" value="1"/>
</dbReference>
<dbReference type="Pfam" id="PF00431">
    <property type="entry name" value="CUB"/>
    <property type="match status" value="1"/>
</dbReference>
<dbReference type="Pfam" id="PF00084">
    <property type="entry name" value="Sushi"/>
    <property type="match status" value="5"/>
</dbReference>
<dbReference type="SMART" id="SM00032">
    <property type="entry name" value="CCP"/>
    <property type="match status" value="5"/>
</dbReference>
<dbReference type="SMART" id="SM00042">
    <property type="entry name" value="CUB"/>
    <property type="match status" value="3"/>
</dbReference>
<dbReference type="SUPFAM" id="SSF57535">
    <property type="entry name" value="Complement control module/SCR domain"/>
    <property type="match status" value="5"/>
</dbReference>
<dbReference type="SUPFAM" id="SSF49854">
    <property type="entry name" value="Spermadhesin, CUB domain"/>
    <property type="match status" value="3"/>
</dbReference>
<dbReference type="PROSITE" id="PS01180">
    <property type="entry name" value="CUB"/>
    <property type="match status" value="3"/>
</dbReference>
<dbReference type="PROSITE" id="PS50923">
    <property type="entry name" value="SUSHI"/>
    <property type="match status" value="5"/>
</dbReference>
<feature type="signal peptide" evidence="1">
    <location>
        <begin position="1"/>
        <end position="27"/>
    </location>
</feature>
<feature type="chain" id="PRO_0000333889" description="Seizure 6-like protein 2">
    <location>
        <begin position="28"/>
        <end position="910"/>
    </location>
</feature>
<feature type="topological domain" description="Extracellular" evidence="2">
    <location>
        <begin position="28"/>
        <end position="844"/>
    </location>
</feature>
<feature type="transmembrane region" description="Helical" evidence="2">
    <location>
        <begin position="845"/>
        <end position="865"/>
    </location>
</feature>
<feature type="topological domain" description="Cytoplasmic" evidence="2">
    <location>
        <begin position="866"/>
        <end position="910"/>
    </location>
</feature>
<feature type="domain" description="CUB 1" evidence="3">
    <location>
        <begin position="173"/>
        <end position="286"/>
    </location>
</feature>
<feature type="domain" description="Sushi 1" evidence="4">
    <location>
        <begin position="288"/>
        <end position="347"/>
    </location>
</feature>
<feature type="domain" description="CUB 2" evidence="3">
    <location>
        <begin position="349"/>
        <end position="459"/>
    </location>
</feature>
<feature type="domain" description="Sushi 2" evidence="4">
    <location>
        <begin position="462"/>
        <end position="525"/>
    </location>
</feature>
<feature type="domain" description="CUB 3" evidence="3">
    <location>
        <begin position="527"/>
        <end position="638"/>
    </location>
</feature>
<feature type="domain" description="Sushi 3" evidence="4">
    <location>
        <begin position="642"/>
        <end position="701"/>
    </location>
</feature>
<feature type="domain" description="Sushi 4" evidence="4">
    <location>
        <begin position="703"/>
        <end position="766"/>
    </location>
</feature>
<feature type="domain" description="Sushi 5" evidence="4">
    <location>
        <begin position="769"/>
        <end position="830"/>
    </location>
</feature>
<feature type="region of interest" description="Disordered" evidence="5">
    <location>
        <begin position="70"/>
        <end position="152"/>
    </location>
</feature>
<feature type="compositionally biased region" description="Pro residues" evidence="5">
    <location>
        <begin position="123"/>
        <end position="145"/>
    </location>
</feature>
<feature type="glycosylation site" description="N-linked (GlcNAc...) asparagine" evidence="2">
    <location>
        <position position="222"/>
    </location>
</feature>
<feature type="glycosylation site" description="N-linked (GlcNAc...) asparagine" evidence="2">
    <location>
        <position position="332"/>
    </location>
</feature>
<feature type="glycosylation site" description="N-linked (GlcNAc...) asparagine" evidence="2">
    <location>
        <position position="373"/>
    </location>
</feature>
<feature type="glycosylation site" description="N-linked (GlcNAc...) asparagine" evidence="2">
    <location>
        <position position="473"/>
    </location>
</feature>
<feature type="glycosylation site" description="N-linked (GlcNAc...) asparagine" evidence="2">
    <location>
        <position position="517"/>
    </location>
</feature>
<feature type="disulfide bond" evidence="1">
    <location>
        <begin position="173"/>
        <end position="202"/>
    </location>
</feature>
<feature type="disulfide bond" evidence="1">
    <location>
        <begin position="290"/>
        <end position="330"/>
    </location>
</feature>
<feature type="disulfide bond" evidence="1">
    <location>
        <begin position="316"/>
        <end position="345"/>
    </location>
</feature>
<feature type="disulfide bond" evidence="1">
    <location>
        <begin position="349"/>
        <end position="376"/>
    </location>
</feature>
<feature type="disulfide bond" evidence="1">
    <location>
        <begin position="464"/>
        <end position="508"/>
    </location>
</feature>
<feature type="disulfide bond" evidence="1">
    <location>
        <begin position="491"/>
        <end position="523"/>
    </location>
</feature>
<feature type="disulfide bond" evidence="1">
    <location>
        <begin position="527"/>
        <end position="553"/>
    </location>
</feature>
<feature type="disulfide bond" evidence="1">
    <location>
        <begin position="644"/>
        <end position="686"/>
    </location>
</feature>
<feature type="disulfide bond" evidence="1">
    <location>
        <begin position="672"/>
        <end position="699"/>
    </location>
</feature>
<feature type="disulfide bond" evidence="1">
    <location>
        <begin position="705"/>
        <end position="747"/>
    </location>
</feature>
<feature type="disulfide bond" evidence="1">
    <location>
        <begin position="733"/>
        <end position="764"/>
    </location>
</feature>
<feature type="disulfide bond" evidence="1">
    <location>
        <begin position="771"/>
        <end position="813"/>
    </location>
</feature>
<feature type="disulfide bond" evidence="1">
    <location>
        <begin position="799"/>
        <end position="828"/>
    </location>
</feature>
<feature type="splice variant" id="VSP_033598" description="In isoform 3." evidence="7">
    <location>
        <begin position="71"/>
        <end position="130"/>
    </location>
</feature>
<feature type="splice variant" id="VSP_033599" description="In isoform 2 and isoform 3." evidence="7 8 9">
    <original>V</original>
    <variation>VAYEELLDNRKLEV</variation>
    <location>
        <position position="830"/>
    </location>
</feature>
<name>SE6L2_MOUSE</name>
<evidence type="ECO:0000250" key="1"/>
<evidence type="ECO:0000255" key="2"/>
<evidence type="ECO:0000255" key="3">
    <source>
        <dbReference type="PROSITE-ProRule" id="PRU00059"/>
    </source>
</evidence>
<evidence type="ECO:0000255" key="4">
    <source>
        <dbReference type="PROSITE-ProRule" id="PRU00302"/>
    </source>
</evidence>
<evidence type="ECO:0000256" key="5">
    <source>
        <dbReference type="SAM" id="MobiDB-lite"/>
    </source>
</evidence>
<evidence type="ECO:0000269" key="6">
    <source>
    </source>
</evidence>
<evidence type="ECO:0000303" key="7">
    <source>
    </source>
</evidence>
<evidence type="ECO:0000303" key="8">
    <source>
    </source>
</evidence>
<evidence type="ECO:0000303" key="9">
    <source>
    </source>
</evidence>
<evidence type="ECO:0000305" key="10"/>
<protein>
    <recommendedName>
        <fullName>Seizure 6-like protein 2</fullName>
    </recommendedName>
    <alternativeName>
        <fullName>Brain-specific receptor-like protein A</fullName>
        <shortName>BSRP-A</shortName>
    </alternativeName>
</protein>
<accession>Q4V9Z5</accession>
<accession>Q6AXF9</accession>
<accession>Q91X64</accession>
<reference key="1">
    <citation type="journal article" date="2006" name="FEBS Lett.">
        <title>Disturbance of cerebellar synaptic maturation in mutant mice lacking BSRPs, a novel brain-specific receptor-like protein family.</title>
        <authorList>
            <person name="Miyazaki T."/>
            <person name="Hashimoto K."/>
            <person name="Uda A."/>
            <person name="Sakagami H."/>
            <person name="Nakamura Y."/>
            <person name="Saito S.Y."/>
            <person name="Nishi M."/>
            <person name="Kume H."/>
            <person name="Tohgo A."/>
            <person name="Kaneko I."/>
            <person name="Kondo H."/>
            <person name="Fukunaga K."/>
            <person name="Kano M."/>
            <person name="Watanabe M."/>
            <person name="Takeshima H."/>
        </authorList>
    </citation>
    <scope>NUCLEOTIDE SEQUENCE [MRNA] (ISOFORM 2)</scope>
    <scope>SUBCELLULAR LOCATION</scope>
    <scope>TISSUE SPECIFICITY</scope>
    <scope>FUNCTION</scope>
    <scope>DISRUPTION PHENOTYPE</scope>
    <source>
        <strain>C57BL/6J</strain>
    </source>
</reference>
<reference key="2">
    <citation type="journal article" date="2005" name="Science">
        <title>The transcriptional landscape of the mammalian genome.</title>
        <authorList>
            <person name="Carninci P."/>
            <person name="Kasukawa T."/>
            <person name="Katayama S."/>
            <person name="Gough J."/>
            <person name="Frith M.C."/>
            <person name="Maeda N."/>
            <person name="Oyama R."/>
            <person name="Ravasi T."/>
            <person name="Lenhard B."/>
            <person name="Wells C."/>
            <person name="Kodzius R."/>
            <person name="Shimokawa K."/>
            <person name="Bajic V.B."/>
            <person name="Brenner S.E."/>
            <person name="Batalov S."/>
            <person name="Forrest A.R."/>
            <person name="Zavolan M."/>
            <person name="Davis M.J."/>
            <person name="Wilming L.G."/>
            <person name="Aidinis V."/>
            <person name="Allen J.E."/>
            <person name="Ambesi-Impiombato A."/>
            <person name="Apweiler R."/>
            <person name="Aturaliya R.N."/>
            <person name="Bailey T.L."/>
            <person name="Bansal M."/>
            <person name="Baxter L."/>
            <person name="Beisel K.W."/>
            <person name="Bersano T."/>
            <person name="Bono H."/>
            <person name="Chalk A.M."/>
            <person name="Chiu K.P."/>
            <person name="Choudhary V."/>
            <person name="Christoffels A."/>
            <person name="Clutterbuck D.R."/>
            <person name="Crowe M.L."/>
            <person name="Dalla E."/>
            <person name="Dalrymple B.P."/>
            <person name="de Bono B."/>
            <person name="Della Gatta G."/>
            <person name="di Bernardo D."/>
            <person name="Down T."/>
            <person name="Engstrom P."/>
            <person name="Fagiolini M."/>
            <person name="Faulkner G."/>
            <person name="Fletcher C.F."/>
            <person name="Fukushima T."/>
            <person name="Furuno M."/>
            <person name="Futaki S."/>
            <person name="Gariboldi M."/>
            <person name="Georgii-Hemming P."/>
            <person name="Gingeras T.R."/>
            <person name="Gojobori T."/>
            <person name="Green R.E."/>
            <person name="Gustincich S."/>
            <person name="Harbers M."/>
            <person name="Hayashi Y."/>
            <person name="Hensch T.K."/>
            <person name="Hirokawa N."/>
            <person name="Hill D."/>
            <person name="Huminiecki L."/>
            <person name="Iacono M."/>
            <person name="Ikeo K."/>
            <person name="Iwama A."/>
            <person name="Ishikawa T."/>
            <person name="Jakt M."/>
            <person name="Kanapin A."/>
            <person name="Katoh M."/>
            <person name="Kawasawa Y."/>
            <person name="Kelso J."/>
            <person name="Kitamura H."/>
            <person name="Kitano H."/>
            <person name="Kollias G."/>
            <person name="Krishnan S.P."/>
            <person name="Kruger A."/>
            <person name="Kummerfeld S.K."/>
            <person name="Kurochkin I.V."/>
            <person name="Lareau L.F."/>
            <person name="Lazarevic D."/>
            <person name="Lipovich L."/>
            <person name="Liu J."/>
            <person name="Liuni S."/>
            <person name="McWilliam S."/>
            <person name="Madan Babu M."/>
            <person name="Madera M."/>
            <person name="Marchionni L."/>
            <person name="Matsuda H."/>
            <person name="Matsuzawa S."/>
            <person name="Miki H."/>
            <person name="Mignone F."/>
            <person name="Miyake S."/>
            <person name="Morris K."/>
            <person name="Mottagui-Tabar S."/>
            <person name="Mulder N."/>
            <person name="Nakano N."/>
            <person name="Nakauchi H."/>
            <person name="Ng P."/>
            <person name="Nilsson R."/>
            <person name="Nishiguchi S."/>
            <person name="Nishikawa S."/>
            <person name="Nori F."/>
            <person name="Ohara O."/>
            <person name="Okazaki Y."/>
            <person name="Orlando V."/>
            <person name="Pang K.C."/>
            <person name="Pavan W.J."/>
            <person name="Pavesi G."/>
            <person name="Pesole G."/>
            <person name="Petrovsky N."/>
            <person name="Piazza S."/>
            <person name="Reed J."/>
            <person name="Reid J.F."/>
            <person name="Ring B.Z."/>
            <person name="Ringwald M."/>
            <person name="Rost B."/>
            <person name="Ruan Y."/>
            <person name="Salzberg S.L."/>
            <person name="Sandelin A."/>
            <person name="Schneider C."/>
            <person name="Schoenbach C."/>
            <person name="Sekiguchi K."/>
            <person name="Semple C.A."/>
            <person name="Seno S."/>
            <person name="Sessa L."/>
            <person name="Sheng Y."/>
            <person name="Shibata Y."/>
            <person name="Shimada H."/>
            <person name="Shimada K."/>
            <person name="Silva D."/>
            <person name="Sinclair B."/>
            <person name="Sperling S."/>
            <person name="Stupka E."/>
            <person name="Sugiura K."/>
            <person name="Sultana R."/>
            <person name="Takenaka Y."/>
            <person name="Taki K."/>
            <person name="Tammoja K."/>
            <person name="Tan S.L."/>
            <person name="Tang S."/>
            <person name="Taylor M.S."/>
            <person name="Tegner J."/>
            <person name="Teichmann S.A."/>
            <person name="Ueda H.R."/>
            <person name="van Nimwegen E."/>
            <person name="Verardo R."/>
            <person name="Wei C.L."/>
            <person name="Yagi K."/>
            <person name="Yamanishi H."/>
            <person name="Zabarovsky E."/>
            <person name="Zhu S."/>
            <person name="Zimmer A."/>
            <person name="Hide W."/>
            <person name="Bult C."/>
            <person name="Grimmond S.M."/>
            <person name="Teasdale R.D."/>
            <person name="Liu E.T."/>
            <person name="Brusic V."/>
            <person name="Quackenbush J."/>
            <person name="Wahlestedt C."/>
            <person name="Mattick J.S."/>
            <person name="Hume D.A."/>
            <person name="Kai C."/>
            <person name="Sasaki D."/>
            <person name="Tomaru Y."/>
            <person name="Fukuda S."/>
            <person name="Kanamori-Katayama M."/>
            <person name="Suzuki M."/>
            <person name="Aoki J."/>
            <person name="Arakawa T."/>
            <person name="Iida J."/>
            <person name="Imamura K."/>
            <person name="Itoh M."/>
            <person name="Kato T."/>
            <person name="Kawaji H."/>
            <person name="Kawagashira N."/>
            <person name="Kawashima T."/>
            <person name="Kojima M."/>
            <person name="Kondo S."/>
            <person name="Konno H."/>
            <person name="Nakano K."/>
            <person name="Ninomiya N."/>
            <person name="Nishio T."/>
            <person name="Okada M."/>
            <person name="Plessy C."/>
            <person name="Shibata K."/>
            <person name="Shiraki T."/>
            <person name="Suzuki S."/>
            <person name="Tagami M."/>
            <person name="Waki K."/>
            <person name="Watahiki A."/>
            <person name="Okamura-Oho Y."/>
            <person name="Suzuki H."/>
            <person name="Kawai J."/>
            <person name="Hayashizaki Y."/>
        </authorList>
    </citation>
    <scope>NUCLEOTIDE SEQUENCE [LARGE SCALE MRNA] (ISOFORM 2)</scope>
    <source>
        <strain>C57BL/6J</strain>
        <tissue>Diencephalon</tissue>
    </source>
</reference>
<reference key="3">
    <citation type="journal article" date="2004" name="Genome Res.">
        <title>The status, quality, and expansion of the NIH full-length cDNA project: the Mammalian Gene Collection (MGC).</title>
        <authorList>
            <consortium name="The MGC Project Team"/>
        </authorList>
    </citation>
    <scope>NUCLEOTIDE SEQUENCE [LARGE SCALE MRNA] (ISOFORMS 1; 2 AND 3)</scope>
    <source>
        <strain>C57BL/6J</strain>
        <strain>FVB/N</strain>
        <tissue>Brain</tissue>
        <tissue>Eye</tissue>
        <tissue>Salivary gland</tissue>
    </source>
</reference>
<reference key="4">
    <citation type="journal article" date="2010" name="Cell">
        <title>A tissue-specific atlas of mouse protein phosphorylation and expression.</title>
        <authorList>
            <person name="Huttlin E.L."/>
            <person name="Jedrychowski M.P."/>
            <person name="Elias J.E."/>
            <person name="Goswami T."/>
            <person name="Rad R."/>
            <person name="Beausoleil S.A."/>
            <person name="Villen J."/>
            <person name="Haas W."/>
            <person name="Sowa M.E."/>
            <person name="Gygi S.P."/>
        </authorList>
    </citation>
    <scope>IDENTIFICATION BY MASS SPECTROMETRY [LARGE SCALE ANALYSIS]</scope>
    <source>
        <tissue>Brain</tissue>
        <tissue>Heart</tissue>
    </source>
</reference>
<proteinExistence type="evidence at protein level"/>
<sequence length="910" mass="97504">MGTPKAQHPPPSQLLLLILLSCAWIEGLPLKEDEMMPEPGSETPTVASEDLAELLHGALLRKGPEIGFLPGSDPDPTLATPPAGQTLAAPSLPRATEPGTGPLTTAVTPKGVRGAGPTAPELLTPPPGTTAPPPPGPASPVPPLRPEGGEEETTTTIITTTTVTTTVTSPVLCNNNISEGEGFVESPDLGSTASRSVELLDCTYSIHVYPGYGIEIQVQTLNLSQEEELLVLAGGGSPGLAPRLLANSSMLGEGQVLRSPTNRLLLHFQSPRVPRGNGFRIHYQAYLLSCGFPPRPAHGDVSVTDLHPGGTATFHCDSGYQLQGEETLICLNGTRPAWTGEPPSCTASCGGTIHNATLGRIVSPEPGGAAGPNLTCRWVIEAAEGRRLHLHFERVSLDEDNDRLMVRSGGSPLSPVIYDSDMDDVPERGLISDAQSLYVELLSETPANPLLLSLRFEAFEEDRCFPPFLAHGNVTTTDPEFHPGALATFSCLPGYALEPPGPPNAIECVDPTEPHWNDTEPACKAMCGGELSEPAGVVLSPDWPQSYSPGQDCVWGLHVQEEKRILLQVEILNVREGDMLTLFDGDGPSARVLAQLRGPQPRRRLLSSGPDLTLQFQAPPGPPNPGLGQGFVLHFKEVPRNDTCPELPPPEWGWRTASHGDLIRGTVLTYQCEPGYELLGSDILTCQWDLSWSAAPPACQKIMTCADPGEITNGHRTASDAGFPVGSHVQYRCLPGYSLEGAAVLTCYSRDTGTPKWSDRVPKCALKYEPCLNPGVPENGYQTLYKHHYQAGESLRFFCYEGFELIGEVTITCVPGHPSQWTSQPPLCKVTQTTDPSRQLEGGNLALAILLPLGLVIVLGIGVYIYYTKLQGKSLFGFSGSHSYSPITVESDFSNPLYEAGDTREYEVSI</sequence>
<comment type="function">
    <text evidence="6">May contribute to specialized endoplasmic reticulum functions in neurons.</text>
</comment>
<comment type="subcellular location">
    <subcellularLocation>
        <location evidence="1">Cell membrane</location>
        <topology evidence="1">Single-pass type I membrane protein</topology>
    </subcellularLocation>
    <subcellularLocation>
        <location evidence="6">Endoplasmic reticulum membrane</location>
        <topology evidence="6">Single-pass type I membrane protein</topology>
    </subcellularLocation>
    <text>In cerebellar predominantly localized to the endoplasmic reticulum.</text>
</comment>
<comment type="alternative products">
    <event type="alternative splicing"/>
    <isoform>
        <id>Q4V9Z5-1</id>
        <name>1</name>
        <sequence type="displayed"/>
    </isoform>
    <isoform>
        <id>Q4V9Z5-2</id>
        <name>2</name>
        <sequence type="described" ref="VSP_033599"/>
    </isoform>
    <isoform>
        <id>Q4V9Z5-3</id>
        <name>3</name>
        <sequence type="described" ref="VSP_033598 VSP_033599"/>
    </isoform>
    <text>Named isoforms=3.</text>
</comment>
<comment type="tissue specificity">
    <text evidence="6">Expressed exclusively in the brain, predominantly in the neurons. Wide expression in the gray matter of the brain with high levels in the olfactory bulb, anterior olfactory nuclei, hippocampal formation and cerebellar cortex. Detected diffusely and weakly in the white matter, such as the corpus callosum and cerebellar medulla. In the cerebellar cortex, intensely expressed in Purkinje cells (PC) and granule cells. Detected also in interneurons in the molecular layer. Up-regulated at two weeks after birth.</text>
</comment>
<comment type="disruption phenotype">
    <text evidence="6">Mice lacking Sez6, Sez6l1, Sez6l2 exhibit motor discordination, and PCs are ofen innervated by multiple climbing fibers with different neuronal origins in the cerebellum.</text>
</comment>
<comment type="similarity">
    <text evidence="10">Belongs to the SEZ6 family.</text>
</comment>
<organism>
    <name type="scientific">Mus musculus</name>
    <name type="common">Mouse</name>
    <dbReference type="NCBI Taxonomy" id="10090"/>
    <lineage>
        <taxon>Eukaryota</taxon>
        <taxon>Metazoa</taxon>
        <taxon>Chordata</taxon>
        <taxon>Craniata</taxon>
        <taxon>Vertebrata</taxon>
        <taxon>Euteleostomi</taxon>
        <taxon>Mammalia</taxon>
        <taxon>Eutheria</taxon>
        <taxon>Euarchontoglires</taxon>
        <taxon>Glires</taxon>
        <taxon>Rodentia</taxon>
        <taxon>Myomorpha</taxon>
        <taxon>Muroidea</taxon>
        <taxon>Muridae</taxon>
        <taxon>Murinae</taxon>
        <taxon>Mus</taxon>
        <taxon>Mus</taxon>
    </lineage>
</organism>